<reference key="1">
    <citation type="journal article" date="2009" name="PLoS Genet.">
        <title>Organised genome dynamics in the Escherichia coli species results in highly diverse adaptive paths.</title>
        <authorList>
            <person name="Touchon M."/>
            <person name="Hoede C."/>
            <person name="Tenaillon O."/>
            <person name="Barbe V."/>
            <person name="Baeriswyl S."/>
            <person name="Bidet P."/>
            <person name="Bingen E."/>
            <person name="Bonacorsi S."/>
            <person name="Bouchier C."/>
            <person name="Bouvet O."/>
            <person name="Calteau A."/>
            <person name="Chiapello H."/>
            <person name="Clermont O."/>
            <person name="Cruveiller S."/>
            <person name="Danchin A."/>
            <person name="Diard M."/>
            <person name="Dossat C."/>
            <person name="Karoui M.E."/>
            <person name="Frapy E."/>
            <person name="Garry L."/>
            <person name="Ghigo J.M."/>
            <person name="Gilles A.M."/>
            <person name="Johnson J."/>
            <person name="Le Bouguenec C."/>
            <person name="Lescat M."/>
            <person name="Mangenot S."/>
            <person name="Martinez-Jehanne V."/>
            <person name="Matic I."/>
            <person name="Nassif X."/>
            <person name="Oztas S."/>
            <person name="Petit M.A."/>
            <person name="Pichon C."/>
            <person name="Rouy Z."/>
            <person name="Ruf C.S."/>
            <person name="Schneider D."/>
            <person name="Tourret J."/>
            <person name="Vacherie B."/>
            <person name="Vallenet D."/>
            <person name="Medigue C."/>
            <person name="Rocha E.P.C."/>
            <person name="Denamur E."/>
        </authorList>
    </citation>
    <scope>NUCLEOTIDE SEQUENCE [LARGE SCALE GENOMIC DNA]</scope>
    <source>
        <strain>UMN026 / ExPEC</strain>
    </source>
</reference>
<feature type="chain" id="PRO_1000136583" description="UPF0259 membrane protein YciC">
    <location>
        <begin position="1"/>
        <end position="247"/>
    </location>
</feature>
<feature type="transmembrane region" description="Helical" evidence="1">
    <location>
        <begin position="20"/>
        <end position="40"/>
    </location>
</feature>
<feature type="transmembrane region" description="Helical" evidence="1">
    <location>
        <begin position="87"/>
        <end position="107"/>
    </location>
</feature>
<feature type="transmembrane region" description="Helical" evidence="1">
    <location>
        <begin position="118"/>
        <end position="140"/>
    </location>
</feature>
<feature type="transmembrane region" description="Helical" evidence="1">
    <location>
        <begin position="152"/>
        <end position="172"/>
    </location>
</feature>
<feature type="transmembrane region" description="Helical" evidence="1">
    <location>
        <begin position="187"/>
        <end position="209"/>
    </location>
</feature>
<feature type="transmembrane region" description="Helical" evidence="1">
    <location>
        <begin position="225"/>
        <end position="245"/>
    </location>
</feature>
<dbReference type="EMBL" id="CU928163">
    <property type="protein sequence ID" value="CAR12761.1"/>
    <property type="molecule type" value="Genomic_DNA"/>
</dbReference>
<dbReference type="RefSeq" id="WP_000028546.1">
    <property type="nucleotide sequence ID" value="NC_011751.1"/>
</dbReference>
<dbReference type="RefSeq" id="YP_002412297.1">
    <property type="nucleotide sequence ID" value="NC_011751.1"/>
</dbReference>
<dbReference type="STRING" id="585056.ECUMN_1554"/>
<dbReference type="KEGG" id="eum:ECUMN_1554"/>
<dbReference type="PATRIC" id="fig|585056.7.peg.1750"/>
<dbReference type="HOGENOM" id="CLU_073287_0_0_6"/>
<dbReference type="Proteomes" id="UP000007097">
    <property type="component" value="Chromosome"/>
</dbReference>
<dbReference type="GO" id="GO:0005886">
    <property type="term" value="C:plasma membrane"/>
    <property type="evidence" value="ECO:0007669"/>
    <property type="project" value="UniProtKB-SubCell"/>
</dbReference>
<dbReference type="HAMAP" id="MF_01067">
    <property type="entry name" value="UPF0259"/>
    <property type="match status" value="1"/>
</dbReference>
<dbReference type="InterPro" id="IPR009627">
    <property type="entry name" value="UPF0259"/>
</dbReference>
<dbReference type="NCBIfam" id="NF002774">
    <property type="entry name" value="PRK02868.1"/>
    <property type="match status" value="1"/>
</dbReference>
<dbReference type="Pfam" id="PF06790">
    <property type="entry name" value="UPF0259"/>
    <property type="match status" value="1"/>
</dbReference>
<evidence type="ECO:0000255" key="1">
    <source>
        <dbReference type="HAMAP-Rule" id="MF_01067"/>
    </source>
</evidence>
<name>YCIC_ECOLU</name>
<comment type="subcellular location">
    <subcellularLocation>
        <location evidence="1">Cell inner membrane</location>
        <topology evidence="1">Multi-pass membrane protein</topology>
    </subcellularLocation>
</comment>
<comment type="similarity">
    <text evidence="1">Belongs to the UPF0259 family.</text>
</comment>
<organism>
    <name type="scientific">Escherichia coli O17:K52:H18 (strain UMN026 / ExPEC)</name>
    <dbReference type="NCBI Taxonomy" id="585056"/>
    <lineage>
        <taxon>Bacteria</taxon>
        <taxon>Pseudomonadati</taxon>
        <taxon>Pseudomonadota</taxon>
        <taxon>Gammaproteobacteria</taxon>
        <taxon>Enterobacterales</taxon>
        <taxon>Enterobacteriaceae</taxon>
        <taxon>Escherichia</taxon>
    </lineage>
</organism>
<keyword id="KW-0997">Cell inner membrane</keyword>
<keyword id="KW-1003">Cell membrane</keyword>
<keyword id="KW-0472">Membrane</keyword>
<keyword id="KW-0812">Transmembrane</keyword>
<keyword id="KW-1133">Transmembrane helix</keyword>
<proteinExistence type="inferred from homology"/>
<protein>
    <recommendedName>
        <fullName evidence="1">UPF0259 membrane protein YciC</fullName>
    </recommendedName>
</protein>
<accession>B7N468</accession>
<sequence length="247" mass="26405">MSITAQSVYRDTGNFFRNQFMTILLVSLLCAFITVVLGHVFSPSDAQLAQLNDGVPVSGSSGLFDLVQNMSPEQQQILLQASAASTFSGLIGNAILAGGVILIIQLVSAGQRVSALRAIGASAPILPKLFILIFLTTLLVQIGIMLVVVPGIIMAILLALAPVMLVQDKMGVFASMRSSMRLTWANMRLVAPAVLSWLLAKTLLLLFASSFAALTPEIGAVLANTLSNLISAVLLIYLFRLYMLIRQ</sequence>
<gene>
    <name evidence="1" type="primary">yciC</name>
    <name type="ordered locus">ECUMN_1554</name>
</gene>